<gene>
    <name type="ordered locus">Bcer98_0945</name>
</gene>
<feature type="chain" id="PRO_1000087462" description="Putative phosphoesterase Bcer98_0945">
    <location>
        <begin position="1"/>
        <end position="172"/>
    </location>
</feature>
<feature type="short sequence motif" description="HXTX 1" evidence="1">
    <location>
        <begin position="34"/>
        <end position="37"/>
    </location>
</feature>
<feature type="short sequence motif" description="HXTX 2" evidence="1">
    <location>
        <begin position="115"/>
        <end position="118"/>
    </location>
</feature>
<feature type="active site" description="Proton donor" evidence="1">
    <location>
        <position position="34"/>
    </location>
</feature>
<feature type="active site" description="Proton acceptor" evidence="1">
    <location>
        <position position="115"/>
    </location>
</feature>
<evidence type="ECO:0000255" key="1">
    <source>
        <dbReference type="HAMAP-Rule" id="MF_01444"/>
    </source>
</evidence>
<keyword id="KW-0378">Hydrolase</keyword>
<protein>
    <recommendedName>
        <fullName evidence="1">Putative phosphoesterase Bcer98_0945</fullName>
        <ecNumber evidence="1">3.1.-.-</ecNumber>
    </recommendedName>
</protein>
<comment type="similarity">
    <text evidence="1">Belongs to the 2H phosphoesterase superfamily. YjcG family.</text>
</comment>
<reference key="1">
    <citation type="journal article" date="2008" name="Chem. Biol. Interact.">
        <title>Extending the Bacillus cereus group genomics to putative food-borne pathogens of different toxicity.</title>
        <authorList>
            <person name="Lapidus A."/>
            <person name="Goltsman E."/>
            <person name="Auger S."/>
            <person name="Galleron N."/>
            <person name="Segurens B."/>
            <person name="Dossat C."/>
            <person name="Land M.L."/>
            <person name="Broussolle V."/>
            <person name="Brillard J."/>
            <person name="Guinebretiere M.-H."/>
            <person name="Sanchis V."/>
            <person name="Nguen-the C."/>
            <person name="Lereclus D."/>
            <person name="Richardson P."/>
            <person name="Wincker P."/>
            <person name="Weissenbach J."/>
            <person name="Ehrlich S.D."/>
            <person name="Sorokin A."/>
        </authorList>
    </citation>
    <scope>NUCLEOTIDE SEQUENCE [LARGE SCALE GENOMIC DNA]</scope>
    <source>
        <strain>DSM 22905 / CIP 110041 / 391-98 / NVH 391-98</strain>
    </source>
</reference>
<dbReference type="EC" id="3.1.-.-" evidence="1"/>
<dbReference type="EMBL" id="CP000764">
    <property type="protein sequence ID" value="ABS21277.1"/>
    <property type="molecule type" value="Genomic_DNA"/>
</dbReference>
<dbReference type="RefSeq" id="WP_011984030.1">
    <property type="nucleotide sequence ID" value="NC_009674.1"/>
</dbReference>
<dbReference type="SMR" id="A7GMB9"/>
<dbReference type="STRING" id="315749.Bcer98_0945"/>
<dbReference type="GeneID" id="33896309"/>
<dbReference type="KEGG" id="bcy:Bcer98_0945"/>
<dbReference type="eggNOG" id="COG1514">
    <property type="taxonomic scope" value="Bacteria"/>
</dbReference>
<dbReference type="HOGENOM" id="CLU_132020_0_0_9"/>
<dbReference type="OrthoDB" id="1524661at2"/>
<dbReference type="Proteomes" id="UP000002300">
    <property type="component" value="Chromosome"/>
</dbReference>
<dbReference type="GO" id="GO:0016788">
    <property type="term" value="F:hydrolase activity, acting on ester bonds"/>
    <property type="evidence" value="ECO:0007669"/>
    <property type="project" value="UniProtKB-UniRule"/>
</dbReference>
<dbReference type="Gene3D" id="3.90.1140.10">
    <property type="entry name" value="Cyclic phosphodiesterase"/>
    <property type="match status" value="1"/>
</dbReference>
<dbReference type="HAMAP" id="MF_01444">
    <property type="entry name" value="2H_phosphoesterase_YjcG"/>
    <property type="match status" value="1"/>
</dbReference>
<dbReference type="InterPro" id="IPR050580">
    <property type="entry name" value="2H_phosphoesterase_YjcG-like"/>
</dbReference>
<dbReference type="InterPro" id="IPR009097">
    <property type="entry name" value="Cyclic_Pdiesterase"/>
</dbReference>
<dbReference type="InterPro" id="IPR022932">
    <property type="entry name" value="YjcG"/>
</dbReference>
<dbReference type="NCBIfam" id="NF010223">
    <property type="entry name" value="PRK13679.1"/>
    <property type="match status" value="1"/>
</dbReference>
<dbReference type="PANTHER" id="PTHR40037:SF1">
    <property type="entry name" value="PHOSPHOESTERASE SAOUHSC_00951-RELATED"/>
    <property type="match status" value="1"/>
</dbReference>
<dbReference type="PANTHER" id="PTHR40037">
    <property type="entry name" value="PHOSPHOESTERASE YJCG-RELATED"/>
    <property type="match status" value="1"/>
</dbReference>
<dbReference type="Pfam" id="PF13563">
    <property type="entry name" value="2_5_RNA_ligase2"/>
    <property type="match status" value="1"/>
</dbReference>
<dbReference type="SUPFAM" id="SSF55144">
    <property type="entry name" value="LigT-like"/>
    <property type="match status" value="1"/>
</dbReference>
<name>Y945_BACCN</name>
<accession>A7GMB9</accession>
<organism>
    <name type="scientific">Bacillus cytotoxicus (strain DSM 22905 / CIP 110041 / 391-98 / NVH 391-98)</name>
    <dbReference type="NCBI Taxonomy" id="315749"/>
    <lineage>
        <taxon>Bacteria</taxon>
        <taxon>Bacillati</taxon>
        <taxon>Bacillota</taxon>
        <taxon>Bacilli</taxon>
        <taxon>Bacillales</taxon>
        <taxon>Bacillaceae</taxon>
        <taxon>Bacillus</taxon>
        <taxon>Bacillus cereus group</taxon>
    </lineage>
</organism>
<proteinExistence type="inferred from homology"/>
<sequence length="172" mass="20038">MKLGIVIFPSKMIQDKANGLRKRYDPHYALVPPHITLKAPFEAPEEQLETIVKELRTIANKTNPFTLHVGKVGSFAPVNNVIYFKVEKTPELTFLNEEMHKGFLTQEREYAFVPHLTIAQKLSDAEHADILGRLRMKDFYYEQTIDRFHLLYQLENETWNVHETFHLGKGSK</sequence>